<proteinExistence type="inferred from homology"/>
<dbReference type="EC" id="3.4.22.-"/>
<dbReference type="EMBL" id="M96262">
    <property type="status" value="NOT_ANNOTATED_CDS"/>
    <property type="molecule type" value="Genomic_RNA"/>
</dbReference>
<dbReference type="SMR" id="P0DJZ9"/>
<dbReference type="Proteomes" id="UP000006687">
    <property type="component" value="Segment"/>
</dbReference>
<dbReference type="GO" id="GO:0030430">
    <property type="term" value="C:host cell cytoplasm"/>
    <property type="evidence" value="ECO:0007669"/>
    <property type="project" value="UniProtKB-SubCell"/>
</dbReference>
<dbReference type="GO" id="GO:0033644">
    <property type="term" value="C:host cell membrane"/>
    <property type="evidence" value="ECO:0007669"/>
    <property type="project" value="UniProtKB-SubCell"/>
</dbReference>
<dbReference type="GO" id="GO:0042025">
    <property type="term" value="C:host cell nucleus"/>
    <property type="evidence" value="ECO:0007669"/>
    <property type="project" value="UniProtKB-SubCell"/>
</dbReference>
<dbReference type="GO" id="GO:0016020">
    <property type="term" value="C:membrane"/>
    <property type="evidence" value="ECO:0007669"/>
    <property type="project" value="UniProtKB-KW"/>
</dbReference>
<dbReference type="GO" id="GO:0004197">
    <property type="term" value="F:cysteine-type endopeptidase activity"/>
    <property type="evidence" value="ECO:0007669"/>
    <property type="project" value="InterPro"/>
</dbReference>
<dbReference type="GO" id="GO:0008270">
    <property type="term" value="F:zinc ion binding"/>
    <property type="evidence" value="ECO:0007669"/>
    <property type="project" value="UniProtKB-KW"/>
</dbReference>
<dbReference type="GO" id="GO:0006508">
    <property type="term" value="P:proteolysis"/>
    <property type="evidence" value="ECO:0007669"/>
    <property type="project" value="UniProtKB-KW"/>
</dbReference>
<dbReference type="GO" id="GO:0019082">
    <property type="term" value="P:viral protein processing"/>
    <property type="evidence" value="ECO:0007669"/>
    <property type="project" value="InterPro"/>
</dbReference>
<dbReference type="GO" id="GO:0075523">
    <property type="term" value="P:viral translational frameshifting"/>
    <property type="evidence" value="ECO:0007669"/>
    <property type="project" value="UniProtKB-KW"/>
</dbReference>
<dbReference type="FunFam" id="3.90.70.160:FF:000001">
    <property type="entry name" value="ORF1a polyprotein"/>
    <property type="match status" value="1"/>
</dbReference>
<dbReference type="FunFam" id="4.10.80.390:FF:000001">
    <property type="entry name" value="ORF1a polyprotein"/>
    <property type="match status" value="1"/>
</dbReference>
<dbReference type="FunFam" id="3.90.70.60:FF:000001">
    <property type="entry name" value="Polyprotein 1a"/>
    <property type="match status" value="1"/>
</dbReference>
<dbReference type="FunFam" id="2.30.31.30:FF:000001">
    <property type="entry name" value="Replicase polyprotein 1ab"/>
    <property type="match status" value="1"/>
</dbReference>
<dbReference type="Gene3D" id="3.90.70.160">
    <property type="match status" value="1"/>
</dbReference>
<dbReference type="Gene3D" id="4.10.80.390">
    <property type="match status" value="1"/>
</dbReference>
<dbReference type="Gene3D" id="2.30.31.30">
    <property type="entry name" value="Arterivirus nps1beta, nuclease domain"/>
    <property type="match status" value="1"/>
</dbReference>
<dbReference type="Gene3D" id="3.90.70.70">
    <property type="entry name" value="Arterivirus papain-like cysteine protease beta domain"/>
    <property type="match status" value="1"/>
</dbReference>
<dbReference type="Gene3D" id="3.90.70.60">
    <property type="entry name" value="Porcine arterivirus-type cysteine proteinase alpha domain"/>
    <property type="match status" value="1"/>
</dbReference>
<dbReference type="InterPro" id="IPR008743">
    <property type="entry name" value="Arterivirus_Nsp2_C33"/>
</dbReference>
<dbReference type="InterPro" id="IPR008741">
    <property type="entry name" value="AV_PCPalpha"/>
</dbReference>
<dbReference type="InterPro" id="IPR038155">
    <property type="entry name" value="AV_PCPalpha_sf"/>
</dbReference>
<dbReference type="InterPro" id="IPR025773">
    <property type="entry name" value="AV_PCPbeta"/>
</dbReference>
<dbReference type="InterPro" id="IPR038154">
    <property type="entry name" value="AV_PCPbeta_sf"/>
</dbReference>
<dbReference type="InterPro" id="IPR054104">
    <property type="entry name" value="Nsp1alpha_Znf"/>
</dbReference>
<dbReference type="InterPro" id="IPR032855">
    <property type="entry name" value="NSP2-B_epitope"/>
</dbReference>
<dbReference type="InterPro" id="IPR032841">
    <property type="entry name" value="NSP2_assoc"/>
</dbReference>
<dbReference type="Pfam" id="PF14757">
    <property type="entry name" value="NSP2-B_epitope"/>
    <property type="match status" value="1"/>
</dbReference>
<dbReference type="Pfam" id="PF14758">
    <property type="entry name" value="NSP2_assoc"/>
    <property type="match status" value="1"/>
</dbReference>
<dbReference type="Pfam" id="PF05410">
    <property type="entry name" value="Peptidase_C31"/>
    <property type="match status" value="1"/>
</dbReference>
<dbReference type="Pfam" id="PF05411">
    <property type="entry name" value="Peptidase_C32"/>
    <property type="match status" value="1"/>
</dbReference>
<dbReference type="Pfam" id="PF05412">
    <property type="entry name" value="Peptidase_C33"/>
    <property type="match status" value="1"/>
</dbReference>
<dbReference type="Pfam" id="PF21905">
    <property type="entry name" value="Zf-Nsp1alpha"/>
    <property type="match status" value="1"/>
</dbReference>
<dbReference type="PROSITE" id="PS51538">
    <property type="entry name" value="AV_CP"/>
    <property type="match status" value="1"/>
</dbReference>
<dbReference type="PROSITE" id="PS51539">
    <property type="entry name" value="AV_PCP_ALPHA"/>
    <property type="match status" value="1"/>
</dbReference>
<dbReference type="PROSITE" id="PS51540">
    <property type="entry name" value="AV_PCP_BETA"/>
    <property type="match status" value="1"/>
</dbReference>
<protein>
    <recommendedName>
        <fullName>Replicase polyprotein 1TF</fullName>
    </recommendedName>
    <alternativeName>
        <fullName>ORF1ab polyprotein</fullName>
    </alternativeName>
    <component>
        <recommendedName>
            <fullName>Nsp1</fullName>
            <ecNumber>3.4.22.-</ecNumber>
        </recommendedName>
    </component>
    <component>
        <recommendedName>
            <fullName>Nsp1-alpha papain-like cysteine proteinase</fullName>
            <ecNumber>3.4.22.-</ecNumber>
        </recommendedName>
        <alternativeName>
            <fullName>PCP1-alpha</fullName>
        </alternativeName>
    </component>
    <component>
        <recommendedName>
            <fullName>Nsp1-beta papain-like cysteine proteinase</fullName>
            <ecNumber>3.4.22.-</ecNumber>
        </recommendedName>
        <alternativeName>
            <fullName>PCP1-beta</fullName>
        </alternativeName>
    </component>
    <component>
        <recommendedName>
            <fullName>Nsp2TF</fullName>
        </recommendedName>
    </component>
</protein>
<organism>
    <name type="scientific">Porcine reproductive and respiratory syndrome virus (strain Lelystad)</name>
    <name type="common">PRRSV</name>
    <dbReference type="NCBI Taxonomy" id="11049"/>
    <lineage>
        <taxon>Viruses</taxon>
        <taxon>Riboviria</taxon>
        <taxon>Orthornavirae</taxon>
        <taxon>Pisuviricota</taxon>
        <taxon>Pisoniviricetes</taxon>
        <taxon>Nidovirales</taxon>
        <taxon>Arnidovirineae</taxon>
        <taxon>Arteriviridae</taxon>
        <taxon>Variarterivirinae</taxon>
        <taxon>Betaarterivirus</taxon>
        <taxon>Eurpobartevirus</taxon>
        <taxon>Betaarterivirus suid 1</taxon>
    </lineage>
</organism>
<evidence type="ECO:0000250" key="1"/>
<evidence type="ECO:0000250" key="2">
    <source>
        <dbReference type="UniProtKB" id="Q04561"/>
    </source>
</evidence>
<evidence type="ECO:0000250" key="3">
    <source>
        <dbReference type="UniProtKB" id="Q9WJB2"/>
    </source>
</evidence>
<evidence type="ECO:0000255" key="4"/>
<evidence type="ECO:0000255" key="5">
    <source>
        <dbReference type="PROSITE-ProRule" id="PRU00872"/>
    </source>
</evidence>
<evidence type="ECO:0000255" key="6">
    <source>
        <dbReference type="PROSITE-ProRule" id="PRU00873"/>
    </source>
</evidence>
<evidence type="ECO:0000256" key="7">
    <source>
        <dbReference type="SAM" id="MobiDB-lite"/>
    </source>
</evidence>
<evidence type="ECO:0000269" key="8">
    <source>
    </source>
</evidence>
<evidence type="ECO:0000269" key="9">
    <source>
    </source>
</evidence>
<organismHost>
    <name type="scientific">Sus scrofa</name>
    <name type="common">Pig</name>
    <dbReference type="NCBI Taxonomy" id="9823"/>
</organismHost>
<keyword id="KW-1035">Host cytoplasm</keyword>
<keyword id="KW-1043">Host membrane</keyword>
<keyword id="KW-1048">Host nucleus</keyword>
<keyword id="KW-0378">Hydrolase</keyword>
<keyword id="KW-0472">Membrane</keyword>
<keyword id="KW-0479">Metal-binding</keyword>
<keyword id="KW-0645">Protease</keyword>
<keyword id="KW-1185">Reference proteome</keyword>
<keyword id="KW-0688">Ribosomal frameshifting</keyword>
<keyword id="KW-0788">Thiol protease</keyword>
<keyword id="KW-0812">Transmembrane</keyword>
<keyword id="KW-1133">Transmembrane helix</keyword>
<keyword id="KW-0862">Zinc</keyword>
<keyword id="KW-0863">Zinc-finger</keyword>
<feature type="chain" id="PRO_0000434874" description="Replicase polyprotein 1TF">
    <location>
        <begin position="1"/>
        <end position="1285"/>
    </location>
</feature>
<feature type="chain" id="PRO_0000434875" description="Nsp1" evidence="1">
    <location>
        <begin position="1"/>
        <end position="384"/>
    </location>
</feature>
<feature type="chain" id="PRO_0000434876" description="Nsp1-alpha papain-like cysteine proteinase" evidence="4">
    <location>
        <begin position="1"/>
        <end position="180"/>
    </location>
</feature>
<feature type="chain" id="PRO_0000434877" description="Nsp1-beta papain-like cysteine proteinase" evidence="4">
    <location>
        <begin position="181"/>
        <end position="385"/>
    </location>
</feature>
<feature type="chain" id="PRO_0000434878" description="Nsp2TF">
    <location>
        <begin position="386"/>
        <end position="1285"/>
    </location>
</feature>
<feature type="transmembrane region" description="Helical" evidence="4">
    <location>
        <begin position="1136"/>
        <end position="1156"/>
    </location>
</feature>
<feature type="transmembrane region" description="Helical" evidence="4">
    <location>
        <begin position="1170"/>
        <end position="1190"/>
    </location>
</feature>
<feature type="transmembrane region" description="Helical" evidence="4">
    <location>
        <begin position="1211"/>
        <end position="1231"/>
    </location>
</feature>
<feature type="transmembrane region" description="Helical" evidence="4">
    <location>
        <begin position="1250"/>
        <end position="1270"/>
    </location>
</feature>
<feature type="domain" description="Peptidase C31" evidence="5">
    <location>
        <begin position="69"/>
        <end position="180"/>
    </location>
</feature>
<feature type="domain" description="Peptidase C32" evidence="6">
    <location>
        <begin position="269"/>
        <end position="385"/>
    </location>
</feature>
<feature type="zinc finger region" description="C4-type; atypical" evidence="2">
    <location>
        <begin position="8"/>
        <end position="28"/>
    </location>
</feature>
<feature type="region of interest" description="PCP1-alpha" evidence="2">
    <location>
        <begin position="69"/>
        <end position="182"/>
    </location>
</feature>
<feature type="region of interest" description="PCP1-beta" evidence="2">
    <location>
        <begin position="269"/>
        <end position="384"/>
    </location>
</feature>
<feature type="region of interest" description="Disordered" evidence="7">
    <location>
        <begin position="752"/>
        <end position="797"/>
    </location>
</feature>
<feature type="region of interest" description="Disordered" evidence="7">
    <location>
        <begin position="1050"/>
        <end position="1088"/>
    </location>
</feature>
<feature type="compositionally biased region" description="Polar residues" evidence="7">
    <location>
        <begin position="775"/>
        <end position="790"/>
    </location>
</feature>
<feature type="active site" description="For Nsp1-alpha papain-like cysteine proteinase activity" evidence="2 5">
    <location>
        <position position="76"/>
    </location>
</feature>
<feature type="active site" description="For Nsp1-alpha papain-like cysteine proteinase activity" evidence="2 5">
    <location>
        <position position="146"/>
    </location>
</feature>
<feature type="active site" description="For Nsp1-beta papain-like cysteine proteinase activity" evidence="2 6">
    <location>
        <position position="276"/>
    </location>
</feature>
<feature type="active site" description="For Nsp1-beta papain-like cysteine proteinase activity" evidence="2 6">
    <location>
        <position position="345"/>
    </location>
</feature>
<feature type="site" description="Cleavage; by autolysis" evidence="4">
    <location>
        <begin position="180"/>
        <end position="181"/>
    </location>
</feature>
<feature type="site" description="Cleavage; by autolysis" evidence="1">
    <location>
        <begin position="385"/>
        <end position="386"/>
    </location>
</feature>
<name>RPOTF_PRRSL</name>
<reference key="1">
    <citation type="journal article" date="1993" name="Virology">
        <title>Lelystad virus, the causative agent of porcine epidemic abortion and respiratory syndrome (PEARS), is related to LDV and EAV.</title>
        <authorList>
            <person name="Meulenberg J.J.M."/>
            <person name="Hulst M.M."/>
            <person name="de Meijer E.J."/>
            <person name="Moonen P.L.J.M."/>
            <person name="den Besten A."/>
            <person name="de Kluyver E.P."/>
            <person name="Wensvoort G."/>
            <person name="Moormann R.J.M."/>
        </authorList>
    </citation>
    <scope>NUCLEOTIDE SEQUENCE [GENOMIC RNA]</scope>
</reference>
<reference key="2">
    <citation type="journal article" date="2012" name="Proc. Natl. Acad. Sci. U.S.A.">
        <title>Efficient -2 frameshifting by mammalian ribosomes to synthesize an additional arterivirus protein.</title>
        <authorList>
            <person name="Fang Y."/>
            <person name="Treffers E.E."/>
            <person name="Li Y."/>
            <person name="Tas A."/>
            <person name="Sun Z."/>
            <person name="van der Meer Y."/>
            <person name="de Ru A.H."/>
            <person name="van Veelen P.A."/>
            <person name="Atkins J.F."/>
            <person name="Snijder E.J."/>
            <person name="Firth A.E."/>
        </authorList>
    </citation>
    <scope>FUNCTION</scope>
    <scope>SUBCELLULAR LOCATION</scope>
</reference>
<reference key="3">
    <citation type="journal article" date="2013" name="Virus Res.">
        <title>Degradation of CREB-binding protein and modulation of type I interferon induction by the zinc finger motif of the porcine reproductive and respiratory syndrome virus nsp1alpha subunit.</title>
        <authorList>
            <person name="Han M."/>
            <person name="Du Y."/>
            <person name="Song C."/>
            <person name="Yoo D."/>
        </authorList>
    </citation>
    <scope>FUNCTION (NSP1-ALPHA PAPAIN-LIKE CYSTEINE PROTEINASE)</scope>
    <scope>SUBCELLULAR LOCATION (NSP1-ALPHA PAPAIN-LIKE CYSTEINE PROTEINASE)</scope>
    <source>
        <strain>PA8</strain>
    </source>
</reference>
<comment type="function">
    <molecule>Nsp1-alpha papain-like cysteine proteinase</molecule>
    <text evidence="3 9">Inhibits host IFN-beta production. Plays a role in the degradation of the host transcriptional activator CREBBP protein. The degradation of host CREBBP which is a key component of the IFN enhanceosome is likely responsible for the inhibition of interferon mediated by Nsp1-alpha. Also participates in the inhibition of host NF-kappa-B activation.</text>
</comment>
<comment type="function">
    <molecule>Nsp1-beta papain-like cysteine proteinase</molecule>
    <text evidence="3">Plays a role in the inhibition of the interferon-activated JAK/STAT signal transduction by mediating the ubiquitination and subsequent proteasomal degradation of host KPNA1.</text>
</comment>
<comment type="function">
    <molecule>Nsp2TF</molecule>
    <text evidence="8">Plays a role in viral replication.</text>
</comment>
<comment type="subcellular location">
    <molecule>Nsp1</molecule>
    <subcellularLocation>
        <location evidence="9">Host nucleus</location>
    </subcellularLocation>
    <subcellularLocation>
        <location evidence="9">Host cytoplasm</location>
    </subcellularLocation>
</comment>
<comment type="subcellular location">
    <molecule>Nsp1-alpha papain-like cysteine proteinase</molecule>
    <subcellularLocation>
        <location evidence="9">Host nucleus</location>
    </subcellularLocation>
    <subcellularLocation>
        <location evidence="9">Host cytoplasm</location>
    </subcellularLocation>
</comment>
<comment type="subcellular location">
    <molecule>Nsp1-beta papain-like cysteine proteinase</molecule>
    <subcellularLocation>
        <location evidence="9">Host nucleus</location>
    </subcellularLocation>
</comment>
<comment type="subcellular location">
    <molecule>Nsp2TF</molecule>
    <subcellularLocation>
        <location evidence="8">Host cytoplasm</location>
    </subcellularLocation>
    <subcellularLocation>
        <location evidence="4">Host membrane</location>
        <topology evidence="4">Multi-pass membrane protein</topology>
    </subcellularLocation>
    <text>Nsp2 and nsp2TF localize to different intracellular compartments.</text>
</comment>
<comment type="alternative products">
    <event type="ribosomal frameshifting"/>
    <isoform>
        <id>P0DJZ9-1</id>
        <name>Replicase polyprotein 1TF</name>
        <sequence type="displayed"/>
    </isoform>
    <isoform>
        <id>Q04561-1</id>
        <name>Replicase polyprotein 1ab</name>
        <name>pp1ab</name>
        <sequence type="external"/>
    </isoform>
    <isoform>
        <id>Q04561-2</id>
        <name>Replicase polyprotein 1a</name>
        <name>pp1a</name>
        <name>ORF1a polyprotein</name>
        <sequence type="external"/>
    </isoform>
</comment>
<comment type="miscellaneous">
    <molecule>Isoform Replicase polyprotein 1TF</molecule>
    <text>Produced by a -2 ribosomal frameshift.</text>
</comment>
<accession>P0DJZ9</accession>
<sequence length="1285" mass="141133">MSGTFSRCMCTPAARVFWNAGQVFCTRCLSARSLLSPELQDTDLGAVGLFYKPRDKLHWKVPIGIPQVECTPSGCCWLSAVFPLARMTSGNHNFLQRLVKVADVLYRDGCLAPRHLRELQVYERGCNWYPITGPVPGMGLFANSMHVSDQPFPGATHVLTNSPLPQQACRQPFCPFEEAHSSVYRWKKFVVFTDSSLNGRSRMMWTPESDDSAALEVLPPELERQVEILIRSFPAHHPVDLADWELTESPENGFSFNTSHSCGHLVQNPDVFDGKCWLSCFLGQSVEVRCHEEHLADAFGYQTKWGVHGKYLQRRLQVRGIRAVVDPDGPIHVEALSCPQSWIRHLTLDDDVTPGFVRLTSLRIVPNTEPTTSRIFRFGAHKWYGAAGKRARAKRAAKSEKDSAPTPKVALPVPTCGITTYSPPTDGSCGWHVLAAIMNRMINGDFTSPLTQYNRPEDDWASDYDLVQAIQCLRLPATVVRNRACPNAKYLIKLNGVHWEVEVRSGMAPRSLSRECVVGVCSEGCVAPPYPADGLPKRALEALASAYRLPSDCVSSGIADFLANPPPQEFWTLDKMLTSPSPERSGFSSLYKLLLEVVPQKCGATEGAFIYAVERMLKDCPSSKQAMALLAKIKVPSSKAPSVSLDECFPTDVLADFEPASQERPQSSGAAVVLCSPDAKEFEEAAPEEVQESGHKAVHSALLAEGPNNEQVQVVAGEQLKLGGCGLAVGNAHEGALVSAGLINLVGGNLSPSDPMKENMLNSREDEPLDLSQPAPASTTTLVREQTPDNPGSDAGALPVTVREFVPTGPILCHVEHCGTESGDSSSPLDLSDAQTLDQPLNLSLAAWPVRATASDPGWVHGRREPVFVKPRNAFSDGDSALQFGELSESSSVIEFDRTKDAPVVDAPVDLTTSNEALSVVDPFEFAELKRPRFSAQALIDRGGPLADVHAKIKNRVYEQCLQACEPGSRATPATREWLDKMWDRVDMKTWRCTSQFQAGRILASLKFLPDMIQDTPPPVPRKNRASDNAGLKQLVAQWDRKLSVTPPPKPVGPVLDQIVPPPTDIQQEDVTPSDGPPHAPDFPSRVSTGGSWKGLMLSGTRLAGSISQRLMTWVFLKFSPTSQLLCSHFSRRGALWLQVIGCLQVSFYLLSCSVVLTRYSDAFPYWVSFLVLCGVFVWVFLVLGWLLLYFYSRLHPTQSVLLVTTIRRSVMLSFWLLSSANFGNLCAALWSAPQASYVSFLASYSVGHVISGMFSYVYACLQIWPFLLFMWCPRGVVTSVGESV</sequence>